<feature type="signal peptide" evidence="1">
    <location>
        <begin position="1"/>
        <end position="22"/>
    </location>
</feature>
<feature type="chain" id="PRO_1000136612" description="Glucans biosynthesis protein G">
    <location>
        <begin position="23"/>
        <end position="511"/>
    </location>
</feature>
<dbReference type="EMBL" id="CU928163">
    <property type="protein sequence ID" value="CAR12433.1"/>
    <property type="molecule type" value="Genomic_DNA"/>
</dbReference>
<dbReference type="RefSeq" id="WP_001300662.1">
    <property type="nucleotide sequence ID" value="NC_011751.1"/>
</dbReference>
<dbReference type="RefSeq" id="YP_002411977.1">
    <property type="nucleotide sequence ID" value="NC_011751.1"/>
</dbReference>
<dbReference type="SMR" id="B7NAS5"/>
<dbReference type="STRING" id="585056.ECUMN_1224"/>
<dbReference type="GeneID" id="93776366"/>
<dbReference type="KEGG" id="eum:ECUMN_1224"/>
<dbReference type="PATRIC" id="fig|585056.7.peg.1426"/>
<dbReference type="HOGENOM" id="CLU_023403_2_0_6"/>
<dbReference type="UniPathway" id="UPA00637"/>
<dbReference type="Proteomes" id="UP000007097">
    <property type="component" value="Chromosome"/>
</dbReference>
<dbReference type="GO" id="GO:0030288">
    <property type="term" value="C:outer membrane-bounded periplasmic space"/>
    <property type="evidence" value="ECO:0007669"/>
    <property type="project" value="TreeGrafter"/>
</dbReference>
<dbReference type="GO" id="GO:0030246">
    <property type="term" value="F:carbohydrate binding"/>
    <property type="evidence" value="ECO:0007669"/>
    <property type="project" value="InterPro"/>
</dbReference>
<dbReference type="GO" id="GO:0003824">
    <property type="term" value="F:catalytic activity"/>
    <property type="evidence" value="ECO:0007669"/>
    <property type="project" value="InterPro"/>
</dbReference>
<dbReference type="GO" id="GO:0051274">
    <property type="term" value="P:beta-glucan biosynthetic process"/>
    <property type="evidence" value="ECO:0007669"/>
    <property type="project" value="TreeGrafter"/>
</dbReference>
<dbReference type="FunFam" id="2.60.40.10:FF:000294">
    <property type="entry name" value="Glucans biosynthesis protein G"/>
    <property type="match status" value="1"/>
</dbReference>
<dbReference type="FunFam" id="2.70.98.10:FF:000001">
    <property type="entry name" value="Glucans biosynthesis protein G"/>
    <property type="match status" value="1"/>
</dbReference>
<dbReference type="Gene3D" id="2.70.98.10">
    <property type="match status" value="1"/>
</dbReference>
<dbReference type="Gene3D" id="2.60.40.10">
    <property type="entry name" value="Immunoglobulins"/>
    <property type="match status" value="1"/>
</dbReference>
<dbReference type="HAMAP" id="MF_01069">
    <property type="entry name" value="MdoG_OpgG"/>
    <property type="match status" value="1"/>
</dbReference>
<dbReference type="InterPro" id="IPR011013">
    <property type="entry name" value="Gal_mutarotase_sf_dom"/>
</dbReference>
<dbReference type="InterPro" id="IPR014718">
    <property type="entry name" value="GH-type_carb-bd"/>
</dbReference>
<dbReference type="InterPro" id="IPR014438">
    <property type="entry name" value="Glucan_biosyn_MdoG/MdoD"/>
</dbReference>
<dbReference type="InterPro" id="IPR007444">
    <property type="entry name" value="Glucan_biosyn_MdoG_C"/>
</dbReference>
<dbReference type="InterPro" id="IPR013783">
    <property type="entry name" value="Ig-like_fold"/>
</dbReference>
<dbReference type="InterPro" id="IPR014756">
    <property type="entry name" value="Ig_E-set"/>
</dbReference>
<dbReference type="InterPro" id="IPR023704">
    <property type="entry name" value="MdoG_OpgG"/>
</dbReference>
<dbReference type="PANTHER" id="PTHR30504">
    <property type="entry name" value="GLUCANS BIOSYNTHESIS PROTEIN"/>
    <property type="match status" value="1"/>
</dbReference>
<dbReference type="PANTHER" id="PTHR30504:SF4">
    <property type="entry name" value="GLUCANS BIOSYNTHESIS PROTEIN G"/>
    <property type="match status" value="1"/>
</dbReference>
<dbReference type="Pfam" id="PF04349">
    <property type="entry name" value="MdoG"/>
    <property type="match status" value="1"/>
</dbReference>
<dbReference type="PIRSF" id="PIRSF006281">
    <property type="entry name" value="MdoG"/>
    <property type="match status" value="1"/>
</dbReference>
<dbReference type="SUPFAM" id="SSF81296">
    <property type="entry name" value="E set domains"/>
    <property type="match status" value="1"/>
</dbReference>
<dbReference type="SUPFAM" id="SSF74650">
    <property type="entry name" value="Galactose mutarotase-like"/>
    <property type="match status" value="1"/>
</dbReference>
<keyword id="KW-0574">Periplasm</keyword>
<keyword id="KW-0732">Signal</keyword>
<comment type="function">
    <text evidence="1">Involved in the biosynthesis of osmoregulated periplasmic glucans (OPGs).</text>
</comment>
<comment type="pathway">
    <text evidence="1">Glycan metabolism; osmoregulated periplasmic glucan (OPG) biosynthesis.</text>
</comment>
<comment type="subcellular location">
    <subcellularLocation>
        <location evidence="1">Periplasm</location>
    </subcellularLocation>
</comment>
<comment type="similarity">
    <text evidence="1">Belongs to the OpgD/OpgG family.</text>
</comment>
<protein>
    <recommendedName>
        <fullName evidence="1">Glucans biosynthesis protein G</fullName>
    </recommendedName>
</protein>
<reference key="1">
    <citation type="journal article" date="2009" name="PLoS Genet.">
        <title>Organised genome dynamics in the Escherichia coli species results in highly diverse adaptive paths.</title>
        <authorList>
            <person name="Touchon M."/>
            <person name="Hoede C."/>
            <person name="Tenaillon O."/>
            <person name="Barbe V."/>
            <person name="Baeriswyl S."/>
            <person name="Bidet P."/>
            <person name="Bingen E."/>
            <person name="Bonacorsi S."/>
            <person name="Bouchier C."/>
            <person name="Bouvet O."/>
            <person name="Calteau A."/>
            <person name="Chiapello H."/>
            <person name="Clermont O."/>
            <person name="Cruveiller S."/>
            <person name="Danchin A."/>
            <person name="Diard M."/>
            <person name="Dossat C."/>
            <person name="Karoui M.E."/>
            <person name="Frapy E."/>
            <person name="Garry L."/>
            <person name="Ghigo J.M."/>
            <person name="Gilles A.M."/>
            <person name="Johnson J."/>
            <person name="Le Bouguenec C."/>
            <person name="Lescat M."/>
            <person name="Mangenot S."/>
            <person name="Martinez-Jehanne V."/>
            <person name="Matic I."/>
            <person name="Nassif X."/>
            <person name="Oztas S."/>
            <person name="Petit M.A."/>
            <person name="Pichon C."/>
            <person name="Rouy Z."/>
            <person name="Ruf C.S."/>
            <person name="Schneider D."/>
            <person name="Tourret J."/>
            <person name="Vacherie B."/>
            <person name="Vallenet D."/>
            <person name="Medigue C."/>
            <person name="Rocha E.P.C."/>
            <person name="Denamur E."/>
        </authorList>
    </citation>
    <scope>NUCLEOTIDE SEQUENCE [LARGE SCALE GENOMIC DNA]</scope>
    <source>
        <strain>UMN026 / ExPEC</strain>
    </source>
</reference>
<accession>B7NAS5</accession>
<proteinExistence type="inferred from homology"/>
<name>OPGG_ECOLU</name>
<organism>
    <name type="scientific">Escherichia coli O17:K52:H18 (strain UMN026 / ExPEC)</name>
    <dbReference type="NCBI Taxonomy" id="585056"/>
    <lineage>
        <taxon>Bacteria</taxon>
        <taxon>Pseudomonadati</taxon>
        <taxon>Pseudomonadota</taxon>
        <taxon>Gammaproteobacteria</taxon>
        <taxon>Enterobacterales</taxon>
        <taxon>Enterobacteriaceae</taxon>
        <taxon>Escherichia</taxon>
    </lineage>
</organism>
<evidence type="ECO:0000255" key="1">
    <source>
        <dbReference type="HAMAP-Rule" id="MF_01069"/>
    </source>
</evidence>
<gene>
    <name evidence="1" type="primary">mdoG</name>
    <name evidence="1" type="synonym">opgG</name>
    <name type="ordered locus">ECUMN_1224</name>
</gene>
<sequence length="511" mass="57882">MMKMRWLSAAVMLTLYTSSSWAFSIDDVAKQAQSLAGKGYEAPKSNLPSVFRDMKYADYQQIQFNHDKAYWNNLKTPFKLEFYHQGMYFDTPVKINEVTATAVKRIKYSPDYFTFGDVQHDKDTVKDLGFAGFKVLYPINSKDKNDEIVSMLGASYFRVIGAGQVYGLSARGLAIDTALPSGEEFPRFKEFWIERPKPTDKRLTIYALLDSPRATGAYKFVVMPGRDTVVDVQSKIYLRDKVGKLGVAPLTSMFLFGPNQPSPANNYRPELHDSNGLSIHAGNGEWIWRPLNNPKHLAVSSFSMENPQGFGLLQRGRDFSRFEDLDDRYDLRPSAWVTPKGEWGKGSVELVEIPTNDETNDNIVAYWTPDQLPEPGKEMNFKYTITFSRDEDKLHAPDNAWVQQTRRSTGDVKQSNLIRQPDGTIAFVVDFTGAEMKKLPEDTPVTAQTSIGDNGEIVESTVRYNPVTKGWRLVMRVKVKDAKKTTEMRAALVNADQTLSETWSYQLPANE</sequence>